<organism>
    <name type="scientific">Azorhizobium caulinodans (strain ATCC 43989 / DSM 5975 / JCM 20966 / LMG 6465 / NBRC 14845 / NCIMB 13405 / ORS 571)</name>
    <dbReference type="NCBI Taxonomy" id="438753"/>
    <lineage>
        <taxon>Bacteria</taxon>
        <taxon>Pseudomonadati</taxon>
        <taxon>Pseudomonadota</taxon>
        <taxon>Alphaproteobacteria</taxon>
        <taxon>Hyphomicrobiales</taxon>
        <taxon>Xanthobacteraceae</taxon>
        <taxon>Azorhizobium</taxon>
    </lineage>
</organism>
<feature type="chain" id="PRO_1000072417" description="Malate dehydrogenase">
    <location>
        <begin position="1"/>
        <end position="321"/>
    </location>
</feature>
<feature type="active site" description="Proton acceptor" evidence="1">
    <location>
        <position position="176"/>
    </location>
</feature>
<feature type="binding site" evidence="1">
    <location>
        <begin position="10"/>
        <end position="15"/>
    </location>
    <ligand>
        <name>NAD(+)</name>
        <dbReference type="ChEBI" id="CHEBI:57540"/>
    </ligand>
</feature>
<feature type="binding site" evidence="1">
    <location>
        <position position="34"/>
    </location>
    <ligand>
        <name>NAD(+)</name>
        <dbReference type="ChEBI" id="CHEBI:57540"/>
    </ligand>
</feature>
<feature type="binding site" evidence="1">
    <location>
        <position position="83"/>
    </location>
    <ligand>
        <name>substrate</name>
    </ligand>
</feature>
<feature type="binding site" evidence="1">
    <location>
        <position position="89"/>
    </location>
    <ligand>
        <name>substrate</name>
    </ligand>
</feature>
<feature type="binding site" evidence="1">
    <location>
        <position position="96"/>
    </location>
    <ligand>
        <name>NAD(+)</name>
        <dbReference type="ChEBI" id="CHEBI:57540"/>
    </ligand>
</feature>
<feature type="binding site" evidence="1">
    <location>
        <begin position="119"/>
        <end position="121"/>
    </location>
    <ligand>
        <name>NAD(+)</name>
        <dbReference type="ChEBI" id="CHEBI:57540"/>
    </ligand>
</feature>
<feature type="binding site" evidence="1">
    <location>
        <position position="121"/>
    </location>
    <ligand>
        <name>substrate</name>
    </ligand>
</feature>
<feature type="binding site" evidence="1">
    <location>
        <position position="152"/>
    </location>
    <ligand>
        <name>substrate</name>
    </ligand>
</feature>
<proteinExistence type="inferred from homology"/>
<sequence>MARSKIALIGAGQIGGTLALLAGLKELGDVVLFDLVEGVPQGKALDLAELSPVAGFDAAFAGTGAYEQIAGADVVIVTAGVPRKPGMSRDDLLAVNLKVMEQAGAGIAKYAPDAFVICVTNPLDAMVWALQKASGLPRHKVVGMAGVLDSARLRYFLADEFNVSVEDVTAMVLGGHGDTMVPLMRYCTVAGIPVPDLIRIGWTSTDRIEAIVTRTRNGGAEIVELLKSGSAFYAPAASAIVMAESYLKDKKRVLPVAAPLSGEYGFRDLYVGVPAVIGARGVERIVELELDRAERAQFEQSVASVQGLVDACAKIAPDLVR</sequence>
<comment type="function">
    <text evidence="1">Catalyzes the reversible oxidation of malate to oxaloacetate.</text>
</comment>
<comment type="catalytic activity">
    <reaction evidence="1">
        <text>(S)-malate + NAD(+) = oxaloacetate + NADH + H(+)</text>
        <dbReference type="Rhea" id="RHEA:21432"/>
        <dbReference type="ChEBI" id="CHEBI:15378"/>
        <dbReference type="ChEBI" id="CHEBI:15589"/>
        <dbReference type="ChEBI" id="CHEBI:16452"/>
        <dbReference type="ChEBI" id="CHEBI:57540"/>
        <dbReference type="ChEBI" id="CHEBI:57945"/>
        <dbReference type="EC" id="1.1.1.37"/>
    </reaction>
</comment>
<comment type="similarity">
    <text evidence="1">Belongs to the LDH/MDH superfamily. MDH type 3 family.</text>
</comment>
<dbReference type="EC" id="1.1.1.37" evidence="1"/>
<dbReference type="EMBL" id="AP009384">
    <property type="protein sequence ID" value="BAF90014.1"/>
    <property type="molecule type" value="Genomic_DNA"/>
</dbReference>
<dbReference type="RefSeq" id="WP_012172536.1">
    <property type="nucleotide sequence ID" value="NC_009937.1"/>
</dbReference>
<dbReference type="SMR" id="A8ILC6"/>
<dbReference type="STRING" id="438753.AZC_4016"/>
<dbReference type="KEGG" id="azc:AZC_4016"/>
<dbReference type="eggNOG" id="COG0039">
    <property type="taxonomic scope" value="Bacteria"/>
</dbReference>
<dbReference type="HOGENOM" id="CLU_045401_2_1_5"/>
<dbReference type="Proteomes" id="UP000000270">
    <property type="component" value="Chromosome"/>
</dbReference>
<dbReference type="GO" id="GO:0004459">
    <property type="term" value="F:L-lactate dehydrogenase activity"/>
    <property type="evidence" value="ECO:0007669"/>
    <property type="project" value="TreeGrafter"/>
</dbReference>
<dbReference type="GO" id="GO:0030060">
    <property type="term" value="F:L-malate dehydrogenase (NAD+) activity"/>
    <property type="evidence" value="ECO:0007669"/>
    <property type="project" value="UniProtKB-UniRule"/>
</dbReference>
<dbReference type="GO" id="GO:0006089">
    <property type="term" value="P:lactate metabolic process"/>
    <property type="evidence" value="ECO:0007669"/>
    <property type="project" value="TreeGrafter"/>
</dbReference>
<dbReference type="GO" id="GO:0006099">
    <property type="term" value="P:tricarboxylic acid cycle"/>
    <property type="evidence" value="ECO:0007669"/>
    <property type="project" value="UniProtKB-UniRule"/>
</dbReference>
<dbReference type="CDD" id="cd01339">
    <property type="entry name" value="LDH-like_MDH"/>
    <property type="match status" value="1"/>
</dbReference>
<dbReference type="FunFam" id="3.40.50.720:FF:000018">
    <property type="entry name" value="Malate dehydrogenase"/>
    <property type="match status" value="1"/>
</dbReference>
<dbReference type="FunFam" id="3.90.110.10:FF:000004">
    <property type="entry name" value="Malate dehydrogenase"/>
    <property type="match status" value="1"/>
</dbReference>
<dbReference type="Gene3D" id="3.90.110.10">
    <property type="entry name" value="Lactate dehydrogenase/glycoside hydrolase, family 4, C-terminal"/>
    <property type="match status" value="1"/>
</dbReference>
<dbReference type="Gene3D" id="3.40.50.720">
    <property type="entry name" value="NAD(P)-binding Rossmann-like Domain"/>
    <property type="match status" value="1"/>
</dbReference>
<dbReference type="HAMAP" id="MF_00487">
    <property type="entry name" value="Malate_dehydrog_3"/>
    <property type="match status" value="1"/>
</dbReference>
<dbReference type="InterPro" id="IPR001557">
    <property type="entry name" value="L-lactate/malate_DH"/>
</dbReference>
<dbReference type="InterPro" id="IPR022383">
    <property type="entry name" value="Lactate/malate_DH_C"/>
</dbReference>
<dbReference type="InterPro" id="IPR001236">
    <property type="entry name" value="Lactate/malate_DH_N"/>
</dbReference>
<dbReference type="InterPro" id="IPR015955">
    <property type="entry name" value="Lactate_DH/Glyco_Ohase_4_C"/>
</dbReference>
<dbReference type="InterPro" id="IPR011275">
    <property type="entry name" value="Malate_DH_type3"/>
</dbReference>
<dbReference type="InterPro" id="IPR036291">
    <property type="entry name" value="NAD(P)-bd_dom_sf"/>
</dbReference>
<dbReference type="NCBIfam" id="TIGR01763">
    <property type="entry name" value="MalateDH_bact"/>
    <property type="match status" value="1"/>
</dbReference>
<dbReference type="NCBIfam" id="NF004863">
    <property type="entry name" value="PRK06223.1"/>
    <property type="match status" value="1"/>
</dbReference>
<dbReference type="PANTHER" id="PTHR43128">
    <property type="entry name" value="L-2-HYDROXYCARBOXYLATE DEHYDROGENASE (NAD(P)(+))"/>
    <property type="match status" value="1"/>
</dbReference>
<dbReference type="PANTHER" id="PTHR43128:SF16">
    <property type="entry name" value="L-LACTATE DEHYDROGENASE"/>
    <property type="match status" value="1"/>
</dbReference>
<dbReference type="Pfam" id="PF02866">
    <property type="entry name" value="Ldh_1_C"/>
    <property type="match status" value="1"/>
</dbReference>
<dbReference type="Pfam" id="PF00056">
    <property type="entry name" value="Ldh_1_N"/>
    <property type="match status" value="1"/>
</dbReference>
<dbReference type="PIRSF" id="PIRSF000102">
    <property type="entry name" value="Lac_mal_DH"/>
    <property type="match status" value="1"/>
</dbReference>
<dbReference type="PRINTS" id="PR00086">
    <property type="entry name" value="LLDHDRGNASE"/>
</dbReference>
<dbReference type="SUPFAM" id="SSF56327">
    <property type="entry name" value="LDH C-terminal domain-like"/>
    <property type="match status" value="1"/>
</dbReference>
<dbReference type="SUPFAM" id="SSF51735">
    <property type="entry name" value="NAD(P)-binding Rossmann-fold domains"/>
    <property type="match status" value="1"/>
</dbReference>
<evidence type="ECO:0000255" key="1">
    <source>
        <dbReference type="HAMAP-Rule" id="MF_00487"/>
    </source>
</evidence>
<name>MDH_AZOC5</name>
<protein>
    <recommendedName>
        <fullName evidence="1">Malate dehydrogenase</fullName>
        <ecNumber evidence="1">1.1.1.37</ecNumber>
    </recommendedName>
</protein>
<reference key="1">
    <citation type="submission" date="2007-04" db="EMBL/GenBank/DDBJ databases">
        <title>Complete genome sequence of the nitrogen-fixing bacterium Azorhizobium caulinodans ORS571.</title>
        <authorList>
            <person name="Lee K.B."/>
            <person name="Backer P.D."/>
            <person name="Aono T."/>
            <person name="Liu C.T."/>
            <person name="Suzuki S."/>
            <person name="Suzuki T."/>
            <person name="Kaneko T."/>
            <person name="Yamada M."/>
            <person name="Tabata S."/>
            <person name="Kupfer D.M."/>
            <person name="Najar F.Z."/>
            <person name="Wiley G.B."/>
            <person name="Roe B."/>
            <person name="Binnewies T."/>
            <person name="Ussery D."/>
            <person name="Vereecke D."/>
            <person name="Gevers D."/>
            <person name="Holsters M."/>
            <person name="Oyaizu H."/>
        </authorList>
    </citation>
    <scope>NUCLEOTIDE SEQUENCE [LARGE SCALE GENOMIC DNA]</scope>
    <source>
        <strain>ATCC 43989 / DSM 5975 / JCM 20966 / LMG 6465 / NBRC 14845 / NCIMB 13405 / ORS 571</strain>
    </source>
</reference>
<keyword id="KW-0520">NAD</keyword>
<keyword id="KW-0560">Oxidoreductase</keyword>
<keyword id="KW-1185">Reference proteome</keyword>
<keyword id="KW-0816">Tricarboxylic acid cycle</keyword>
<accession>A8ILC6</accession>
<gene>
    <name evidence="1" type="primary">mdh</name>
    <name type="ordered locus">AZC_4016</name>
</gene>